<sequence>MADSSFDVVSKVDRQEVDNALNQAAKELSTRFDFRGTDTTIAWKGEEAIEIVSSTEERVKAAVDVFKEKLVRRDISMKAFDAGDPQASGKTYKVSGTLKQGISSEDAKKITKLIRDEGPKGVKAQIQGDEIRVSSKKRDDLQAVIALLKGADLDVALQFVNYR</sequence>
<feature type="chain" id="PRO_1000051744" description="Nucleotide-binding protein Mvan_0997">
    <location>
        <begin position="1"/>
        <end position="163"/>
    </location>
</feature>
<organism>
    <name type="scientific">Mycolicibacterium vanbaalenii (strain DSM 7251 / JCM 13017 / BCRC 16820 / KCTC 9966 / NRRL B-24157 / PYR-1)</name>
    <name type="common">Mycobacterium vanbaalenii</name>
    <dbReference type="NCBI Taxonomy" id="350058"/>
    <lineage>
        <taxon>Bacteria</taxon>
        <taxon>Bacillati</taxon>
        <taxon>Actinomycetota</taxon>
        <taxon>Actinomycetes</taxon>
        <taxon>Mycobacteriales</taxon>
        <taxon>Mycobacteriaceae</taxon>
        <taxon>Mycolicibacterium</taxon>
    </lineage>
</organism>
<dbReference type="EMBL" id="CP000511">
    <property type="protein sequence ID" value="ABM11835.1"/>
    <property type="molecule type" value="Genomic_DNA"/>
</dbReference>
<dbReference type="RefSeq" id="WP_011778270.1">
    <property type="nucleotide sequence ID" value="NZ_JACKSD010000129.1"/>
</dbReference>
<dbReference type="SMR" id="A1T3T5"/>
<dbReference type="STRING" id="350058.Mvan_0997"/>
<dbReference type="KEGG" id="mva:Mvan_0997"/>
<dbReference type="eggNOG" id="COG1666">
    <property type="taxonomic scope" value="Bacteria"/>
</dbReference>
<dbReference type="HOGENOM" id="CLU_099839_0_0_11"/>
<dbReference type="Proteomes" id="UP000009159">
    <property type="component" value="Chromosome"/>
</dbReference>
<dbReference type="GO" id="GO:0005829">
    <property type="term" value="C:cytosol"/>
    <property type="evidence" value="ECO:0007669"/>
    <property type="project" value="TreeGrafter"/>
</dbReference>
<dbReference type="GO" id="GO:0000166">
    <property type="term" value="F:nucleotide binding"/>
    <property type="evidence" value="ECO:0007669"/>
    <property type="project" value="TreeGrafter"/>
</dbReference>
<dbReference type="CDD" id="cd11740">
    <property type="entry name" value="YajQ_like"/>
    <property type="match status" value="1"/>
</dbReference>
<dbReference type="FunFam" id="3.30.70.860:FF:000004">
    <property type="entry name" value="UPF0234 protein AWC22_11905"/>
    <property type="match status" value="1"/>
</dbReference>
<dbReference type="FunFam" id="3.30.70.990:FF:000003">
    <property type="entry name" value="UPF0234 protein MIP_06774"/>
    <property type="match status" value="1"/>
</dbReference>
<dbReference type="Gene3D" id="3.30.70.860">
    <property type="match status" value="1"/>
</dbReference>
<dbReference type="Gene3D" id="3.30.70.990">
    <property type="entry name" value="YajQ-like, domain 2"/>
    <property type="match status" value="1"/>
</dbReference>
<dbReference type="HAMAP" id="MF_00632">
    <property type="entry name" value="YajQ"/>
    <property type="match status" value="1"/>
</dbReference>
<dbReference type="InterPro" id="IPR007551">
    <property type="entry name" value="DUF520"/>
</dbReference>
<dbReference type="InterPro" id="IPR035571">
    <property type="entry name" value="UPF0234-like_C"/>
</dbReference>
<dbReference type="InterPro" id="IPR035570">
    <property type="entry name" value="UPF0234_N"/>
</dbReference>
<dbReference type="InterPro" id="IPR036183">
    <property type="entry name" value="YajQ-like_sf"/>
</dbReference>
<dbReference type="NCBIfam" id="NF003819">
    <property type="entry name" value="PRK05412.1"/>
    <property type="match status" value="1"/>
</dbReference>
<dbReference type="PANTHER" id="PTHR30476">
    <property type="entry name" value="UPF0234 PROTEIN YAJQ"/>
    <property type="match status" value="1"/>
</dbReference>
<dbReference type="PANTHER" id="PTHR30476:SF0">
    <property type="entry name" value="UPF0234 PROTEIN YAJQ"/>
    <property type="match status" value="1"/>
</dbReference>
<dbReference type="Pfam" id="PF04461">
    <property type="entry name" value="DUF520"/>
    <property type="match status" value="1"/>
</dbReference>
<dbReference type="SUPFAM" id="SSF89963">
    <property type="entry name" value="YajQ-like"/>
    <property type="match status" value="2"/>
</dbReference>
<gene>
    <name type="ordered locus">Mvan_0997</name>
</gene>
<keyword id="KW-0547">Nucleotide-binding</keyword>
<accession>A1T3T5</accession>
<comment type="function">
    <text evidence="1">Nucleotide-binding protein.</text>
</comment>
<comment type="similarity">
    <text evidence="1">Belongs to the YajQ family.</text>
</comment>
<name>Y997_MYCVP</name>
<reference key="1">
    <citation type="submission" date="2006-12" db="EMBL/GenBank/DDBJ databases">
        <title>Complete sequence of Mycobacterium vanbaalenii PYR-1.</title>
        <authorList>
            <consortium name="US DOE Joint Genome Institute"/>
            <person name="Copeland A."/>
            <person name="Lucas S."/>
            <person name="Lapidus A."/>
            <person name="Barry K."/>
            <person name="Detter J.C."/>
            <person name="Glavina del Rio T."/>
            <person name="Hammon N."/>
            <person name="Israni S."/>
            <person name="Dalin E."/>
            <person name="Tice H."/>
            <person name="Pitluck S."/>
            <person name="Singan V."/>
            <person name="Schmutz J."/>
            <person name="Larimer F."/>
            <person name="Land M."/>
            <person name="Hauser L."/>
            <person name="Kyrpides N."/>
            <person name="Anderson I.J."/>
            <person name="Miller C."/>
            <person name="Richardson P."/>
        </authorList>
    </citation>
    <scope>NUCLEOTIDE SEQUENCE [LARGE SCALE GENOMIC DNA]</scope>
    <source>
        <strain>DSM 7251 / JCM 13017 / BCRC 16820 / KCTC 9966 / NRRL B-24157 / PYR-1</strain>
    </source>
</reference>
<proteinExistence type="inferred from homology"/>
<evidence type="ECO:0000255" key="1">
    <source>
        <dbReference type="HAMAP-Rule" id="MF_00632"/>
    </source>
</evidence>
<protein>
    <recommendedName>
        <fullName evidence="1">Nucleotide-binding protein Mvan_0997</fullName>
    </recommendedName>
</protein>